<reference key="1">
    <citation type="journal article" date="2003" name="Nature">
        <title>Genome sequence of Bacillus cereus and comparative analysis with Bacillus anthracis.</title>
        <authorList>
            <person name="Ivanova N."/>
            <person name="Sorokin A."/>
            <person name="Anderson I."/>
            <person name="Galleron N."/>
            <person name="Candelon B."/>
            <person name="Kapatral V."/>
            <person name="Bhattacharyya A."/>
            <person name="Reznik G."/>
            <person name="Mikhailova N."/>
            <person name="Lapidus A."/>
            <person name="Chu L."/>
            <person name="Mazur M."/>
            <person name="Goltsman E."/>
            <person name="Larsen N."/>
            <person name="D'Souza M."/>
            <person name="Walunas T."/>
            <person name="Grechkin Y."/>
            <person name="Pusch G."/>
            <person name="Haselkorn R."/>
            <person name="Fonstein M."/>
            <person name="Ehrlich S.D."/>
            <person name="Overbeek R."/>
            <person name="Kyrpides N.C."/>
        </authorList>
    </citation>
    <scope>NUCLEOTIDE SEQUENCE [LARGE SCALE GENOMIC DNA]</scope>
    <source>
        <strain>ATCC 14579 / DSM 31 / CCUG 7414 / JCM 2152 / NBRC 15305 / NCIMB 9373 / NCTC 2599 / NRRL B-3711</strain>
    </source>
</reference>
<dbReference type="EMBL" id="AE016877">
    <property type="protein sequence ID" value="AAP12168.1"/>
    <property type="molecule type" value="Genomic_DNA"/>
</dbReference>
<dbReference type="RefSeq" id="NP_834967.1">
    <property type="nucleotide sequence ID" value="NC_004722.1"/>
</dbReference>
<dbReference type="RefSeq" id="WP_000847211.1">
    <property type="nucleotide sequence ID" value="NZ_CP138336.1"/>
</dbReference>
<dbReference type="SMR" id="Q814W3"/>
<dbReference type="STRING" id="226900.BC_5305"/>
<dbReference type="GeneID" id="93005819"/>
<dbReference type="KEGG" id="bce:BC5305"/>
<dbReference type="PATRIC" id="fig|226900.8.peg.5477"/>
<dbReference type="HOGENOM" id="CLU_084338_1_3_9"/>
<dbReference type="OrthoDB" id="9804110at2"/>
<dbReference type="Proteomes" id="UP000001417">
    <property type="component" value="Chromosome"/>
</dbReference>
<dbReference type="GO" id="GO:0005886">
    <property type="term" value="C:plasma membrane"/>
    <property type="evidence" value="ECO:0007669"/>
    <property type="project" value="UniProtKB-SubCell"/>
</dbReference>
<dbReference type="GO" id="GO:0045259">
    <property type="term" value="C:proton-transporting ATP synthase complex"/>
    <property type="evidence" value="ECO:0007669"/>
    <property type="project" value="UniProtKB-KW"/>
</dbReference>
<dbReference type="GO" id="GO:0005524">
    <property type="term" value="F:ATP binding"/>
    <property type="evidence" value="ECO:0007669"/>
    <property type="project" value="UniProtKB-UniRule"/>
</dbReference>
<dbReference type="GO" id="GO:0046933">
    <property type="term" value="F:proton-transporting ATP synthase activity, rotational mechanism"/>
    <property type="evidence" value="ECO:0007669"/>
    <property type="project" value="UniProtKB-UniRule"/>
</dbReference>
<dbReference type="GO" id="GO:0015986">
    <property type="term" value="P:proton motive force-driven ATP synthesis"/>
    <property type="evidence" value="ECO:0000318"/>
    <property type="project" value="GO_Central"/>
</dbReference>
<dbReference type="CDD" id="cd12152">
    <property type="entry name" value="F1-ATPase_delta"/>
    <property type="match status" value="1"/>
</dbReference>
<dbReference type="FunFam" id="1.20.5.440:FF:000001">
    <property type="entry name" value="ATP synthase epsilon chain"/>
    <property type="match status" value="1"/>
</dbReference>
<dbReference type="FunFam" id="2.60.15.10:FF:000001">
    <property type="entry name" value="ATP synthase epsilon chain"/>
    <property type="match status" value="1"/>
</dbReference>
<dbReference type="Gene3D" id="1.20.5.440">
    <property type="entry name" value="ATP synthase delta/epsilon subunit, C-terminal domain"/>
    <property type="match status" value="1"/>
</dbReference>
<dbReference type="Gene3D" id="2.60.15.10">
    <property type="entry name" value="F0F1 ATP synthase delta/epsilon subunit, N-terminal"/>
    <property type="match status" value="1"/>
</dbReference>
<dbReference type="HAMAP" id="MF_00530">
    <property type="entry name" value="ATP_synth_epsil_bac"/>
    <property type="match status" value="1"/>
</dbReference>
<dbReference type="InterPro" id="IPR036794">
    <property type="entry name" value="ATP_F1_dsu/esu_C_sf"/>
</dbReference>
<dbReference type="InterPro" id="IPR001469">
    <property type="entry name" value="ATP_synth_F1_dsu/esu"/>
</dbReference>
<dbReference type="InterPro" id="IPR020546">
    <property type="entry name" value="ATP_synth_F1_dsu/esu_N"/>
</dbReference>
<dbReference type="InterPro" id="IPR020547">
    <property type="entry name" value="ATP_synth_F1_esu_C"/>
</dbReference>
<dbReference type="InterPro" id="IPR036771">
    <property type="entry name" value="ATPsynth_dsu/esu_N"/>
</dbReference>
<dbReference type="NCBIfam" id="TIGR01216">
    <property type="entry name" value="ATP_synt_epsi"/>
    <property type="match status" value="1"/>
</dbReference>
<dbReference type="NCBIfam" id="NF001846">
    <property type="entry name" value="PRK00571.1-3"/>
    <property type="match status" value="1"/>
</dbReference>
<dbReference type="NCBIfam" id="NF009980">
    <property type="entry name" value="PRK13446.1"/>
    <property type="match status" value="1"/>
</dbReference>
<dbReference type="PANTHER" id="PTHR13822">
    <property type="entry name" value="ATP SYNTHASE DELTA/EPSILON CHAIN"/>
    <property type="match status" value="1"/>
</dbReference>
<dbReference type="PANTHER" id="PTHR13822:SF10">
    <property type="entry name" value="ATP SYNTHASE EPSILON CHAIN, CHLOROPLASTIC"/>
    <property type="match status" value="1"/>
</dbReference>
<dbReference type="Pfam" id="PF00401">
    <property type="entry name" value="ATP-synt_DE"/>
    <property type="match status" value="1"/>
</dbReference>
<dbReference type="Pfam" id="PF02823">
    <property type="entry name" value="ATP-synt_DE_N"/>
    <property type="match status" value="1"/>
</dbReference>
<dbReference type="SUPFAM" id="SSF46604">
    <property type="entry name" value="Epsilon subunit of F1F0-ATP synthase C-terminal domain"/>
    <property type="match status" value="1"/>
</dbReference>
<dbReference type="SUPFAM" id="SSF51344">
    <property type="entry name" value="Epsilon subunit of F1F0-ATP synthase N-terminal domain"/>
    <property type="match status" value="1"/>
</dbReference>
<comment type="function">
    <text evidence="1">Produces ATP from ADP in the presence of a proton gradient across the membrane.</text>
</comment>
<comment type="subunit">
    <text>F-type ATPases have 2 components, CF(1) - the catalytic core - and CF(0) - the membrane proton channel. CF(1) has five subunits: alpha(3), beta(3), gamma(1), delta(1), epsilon(1). CF(0) has three main subunits: a, b and c.</text>
</comment>
<comment type="subcellular location">
    <subcellularLocation>
        <location evidence="1">Cell membrane</location>
        <topology evidence="1">Peripheral membrane protein</topology>
    </subcellularLocation>
</comment>
<comment type="similarity">
    <text evidence="1">Belongs to the ATPase epsilon chain family.</text>
</comment>
<feature type="chain" id="PRO_0000188092" description="ATP synthase epsilon chain">
    <location>
        <begin position="1"/>
        <end position="133"/>
    </location>
</feature>
<organism>
    <name type="scientific">Bacillus cereus (strain ATCC 14579 / DSM 31 / CCUG 7414 / JCM 2152 / NBRC 15305 / NCIMB 9373 / NCTC 2599 / NRRL B-3711)</name>
    <dbReference type="NCBI Taxonomy" id="226900"/>
    <lineage>
        <taxon>Bacteria</taxon>
        <taxon>Bacillati</taxon>
        <taxon>Bacillota</taxon>
        <taxon>Bacilli</taxon>
        <taxon>Bacillales</taxon>
        <taxon>Bacillaceae</taxon>
        <taxon>Bacillus</taxon>
        <taxon>Bacillus cereus group</taxon>
    </lineage>
</organism>
<protein>
    <recommendedName>
        <fullName evidence="1">ATP synthase epsilon chain</fullName>
    </recommendedName>
    <alternativeName>
        <fullName evidence="1">ATP synthase F1 sector epsilon subunit</fullName>
    </alternativeName>
    <alternativeName>
        <fullName evidence="1">F-ATPase epsilon subunit</fullName>
    </alternativeName>
</protein>
<name>ATPE_BACCR</name>
<evidence type="ECO:0000255" key="1">
    <source>
        <dbReference type="HAMAP-Rule" id="MF_00530"/>
    </source>
</evidence>
<keyword id="KW-0066">ATP synthesis</keyword>
<keyword id="KW-1003">Cell membrane</keyword>
<keyword id="KW-0139">CF(1)</keyword>
<keyword id="KW-0375">Hydrogen ion transport</keyword>
<keyword id="KW-0406">Ion transport</keyword>
<keyword id="KW-0472">Membrane</keyword>
<keyword id="KW-1185">Reference proteome</keyword>
<keyword id="KW-0813">Transport</keyword>
<proteinExistence type="inferred from homology"/>
<gene>
    <name evidence="1" type="primary">atpC</name>
    <name type="ordered locus">BC_5305</name>
</gene>
<accession>Q814W3</accession>
<sequence>MKTFPVSIVTPDGPVYEKEVEMVSVKAESGEMGILPGHIPTVAPLKISAVRLKNGGHTDYVAVSGGFIEVRPDKVTVLSSSAEEANHIDIHRANEAKRRAEQRLQDKQAHVDFKRAEMALQRAVNRLNVSDMK</sequence>